<keyword id="KW-0175">Coiled coil</keyword>
<keyword id="KW-0539">Nucleus</keyword>
<keyword id="KW-1185">Reference proteome</keyword>
<accession>A0A178VBJ0</accession>
<accession>A0A1I9LS38</accession>
<accession>Q9SD19</accession>
<evidence type="ECO:0000255" key="1"/>
<evidence type="ECO:0000256" key="2">
    <source>
        <dbReference type="SAM" id="MobiDB-lite"/>
    </source>
</evidence>
<evidence type="ECO:0000269" key="3">
    <source>
    </source>
</evidence>
<evidence type="ECO:0000303" key="4">
    <source>
    </source>
</evidence>
<evidence type="ECO:0000305" key="5"/>
<evidence type="ECO:0000312" key="6">
    <source>
        <dbReference type="Araport" id="AT3G51290"/>
    </source>
</evidence>
<evidence type="ECO:0000312" key="7">
    <source>
        <dbReference type="EMBL" id="CAB62651.1"/>
    </source>
</evidence>
<proteinExistence type="evidence at transcript level"/>
<organism>
    <name type="scientific">Arabidopsis thaliana</name>
    <name type="common">Mouse-ear cress</name>
    <dbReference type="NCBI Taxonomy" id="3702"/>
    <lineage>
        <taxon>Eukaryota</taxon>
        <taxon>Viridiplantae</taxon>
        <taxon>Streptophyta</taxon>
        <taxon>Embryophyta</taxon>
        <taxon>Tracheophyta</taxon>
        <taxon>Spermatophyta</taxon>
        <taxon>Magnoliopsida</taxon>
        <taxon>eudicotyledons</taxon>
        <taxon>Gunneridae</taxon>
        <taxon>Pentapetalae</taxon>
        <taxon>rosids</taxon>
        <taxon>malvids</taxon>
        <taxon>Brassicales</taxon>
        <taxon>Brassicaceae</taxon>
        <taxon>Camelineae</taxon>
        <taxon>Arabidopsis</taxon>
    </lineage>
</organism>
<sequence length="640" mass="71722">MGCCQSRIDSKEIVSRCKARKRYLKHLVKARQTLSVSHALYLRSLRAVGSSLVHFSSKETPLHLHHNPPSPSPPPPPPPRPPPPPLSPGSETTTWTTTTTSSVLPPPPPPPPPPPPPSSTWDFWDPFIPPPPSSSEEEWEEETTTATRTATGTGSDAAVTTAPTTATPQASSVVSGFSKDTMTTTTTGSELAVVVSRNGKDLMEIIKEVDEYFLKAADSGAPLSSLLEISTSITDFSGHSKSGKMYSSSNYECNLNPTSFWTRGFAPSKLSEYRNAGGVIGGNCIVGSHSSTVDRLYAWEKKLYQEVKYAESIKMDHEKKVEQVRRLEMKRAEYVKTEKAKKDVEKLESQLSVSSQAIQSASNEIIKLRETELYPQLVELVKGLMCMWRSMYESHQVQTHIVQQLKYLNTIPSTEPTSELHRQSTLQLELEVQQWHHSFCNLVKAQRDYIQSLTGWLRLSLFQFSKNPLVRSSYESKIYSFCEEWHLAIDRIPDKVASEGIKSFLTAVHGIVAQQADEHKQKKRTESMLKDFEKKSASLRALESKYSPYSVPESRKKNPVIEKRVKVEMLKGKAEEEKSKHEKSVSVTRAMTLNNLQMGFPHVFQAMVGFSSVCMQAFESVYNQAKSIGEDQEEVKRLLP</sequence>
<gene>
    <name evidence="4" type="primary">APSR1</name>
    <name evidence="6" type="ordered locus">At3g51290</name>
    <name evidence="7" type="ORF">F24M12.330</name>
</gene>
<reference key="1">
    <citation type="journal article" date="2000" name="Nature">
        <title>Sequence and analysis of chromosome 3 of the plant Arabidopsis thaliana.</title>
        <authorList>
            <person name="Salanoubat M."/>
            <person name="Lemcke K."/>
            <person name="Rieger M."/>
            <person name="Ansorge W."/>
            <person name="Unseld M."/>
            <person name="Fartmann B."/>
            <person name="Valle G."/>
            <person name="Bloecker H."/>
            <person name="Perez-Alonso M."/>
            <person name="Obermaier B."/>
            <person name="Delseny M."/>
            <person name="Boutry M."/>
            <person name="Grivell L.A."/>
            <person name="Mache R."/>
            <person name="Puigdomenech P."/>
            <person name="De Simone V."/>
            <person name="Choisne N."/>
            <person name="Artiguenave F."/>
            <person name="Robert C."/>
            <person name="Brottier P."/>
            <person name="Wincker P."/>
            <person name="Cattolico L."/>
            <person name="Weissenbach J."/>
            <person name="Saurin W."/>
            <person name="Quetier F."/>
            <person name="Schaefer M."/>
            <person name="Mueller-Auer S."/>
            <person name="Gabel C."/>
            <person name="Fuchs M."/>
            <person name="Benes V."/>
            <person name="Wurmbach E."/>
            <person name="Drzonek H."/>
            <person name="Erfle H."/>
            <person name="Jordan N."/>
            <person name="Bangert S."/>
            <person name="Wiedelmann R."/>
            <person name="Kranz H."/>
            <person name="Voss H."/>
            <person name="Holland R."/>
            <person name="Brandt P."/>
            <person name="Nyakatura G."/>
            <person name="Vezzi A."/>
            <person name="D'Angelo M."/>
            <person name="Pallavicini A."/>
            <person name="Toppo S."/>
            <person name="Simionati B."/>
            <person name="Conrad A."/>
            <person name="Hornischer K."/>
            <person name="Kauer G."/>
            <person name="Loehnert T.-H."/>
            <person name="Nordsiek G."/>
            <person name="Reichelt J."/>
            <person name="Scharfe M."/>
            <person name="Schoen O."/>
            <person name="Bargues M."/>
            <person name="Terol J."/>
            <person name="Climent J."/>
            <person name="Navarro P."/>
            <person name="Collado C."/>
            <person name="Perez-Perez A."/>
            <person name="Ottenwaelder B."/>
            <person name="Duchemin D."/>
            <person name="Cooke R."/>
            <person name="Laudie M."/>
            <person name="Berger-Llauro C."/>
            <person name="Purnelle B."/>
            <person name="Masuy D."/>
            <person name="de Haan M."/>
            <person name="Maarse A.C."/>
            <person name="Alcaraz J.-P."/>
            <person name="Cottet A."/>
            <person name="Casacuberta E."/>
            <person name="Monfort A."/>
            <person name="Argiriou A."/>
            <person name="Flores M."/>
            <person name="Liguori R."/>
            <person name="Vitale D."/>
            <person name="Mannhaupt G."/>
            <person name="Haase D."/>
            <person name="Schoof H."/>
            <person name="Rudd S."/>
            <person name="Zaccaria P."/>
            <person name="Mewes H.-W."/>
            <person name="Mayer K.F.X."/>
            <person name="Kaul S."/>
            <person name="Town C.D."/>
            <person name="Koo H.L."/>
            <person name="Tallon L.J."/>
            <person name="Jenkins J."/>
            <person name="Rooney T."/>
            <person name="Rizzo M."/>
            <person name="Walts A."/>
            <person name="Utterback T."/>
            <person name="Fujii C.Y."/>
            <person name="Shea T.P."/>
            <person name="Creasy T.H."/>
            <person name="Haas B."/>
            <person name="Maiti R."/>
            <person name="Wu D."/>
            <person name="Peterson J."/>
            <person name="Van Aken S."/>
            <person name="Pai G."/>
            <person name="Militscher J."/>
            <person name="Sellers P."/>
            <person name="Gill J.E."/>
            <person name="Feldblyum T.V."/>
            <person name="Preuss D."/>
            <person name="Lin X."/>
            <person name="Nierman W.C."/>
            <person name="Salzberg S.L."/>
            <person name="White O."/>
            <person name="Venter J.C."/>
            <person name="Fraser C.M."/>
            <person name="Kaneko T."/>
            <person name="Nakamura Y."/>
            <person name="Sato S."/>
            <person name="Kato T."/>
            <person name="Asamizu E."/>
            <person name="Sasamoto S."/>
            <person name="Kimura T."/>
            <person name="Idesawa K."/>
            <person name="Kawashima K."/>
            <person name="Kishida Y."/>
            <person name="Kiyokawa C."/>
            <person name="Kohara M."/>
            <person name="Matsumoto M."/>
            <person name="Matsuno A."/>
            <person name="Muraki A."/>
            <person name="Nakayama S."/>
            <person name="Nakazaki N."/>
            <person name="Shinpo S."/>
            <person name="Takeuchi C."/>
            <person name="Wada T."/>
            <person name="Watanabe A."/>
            <person name="Yamada M."/>
            <person name="Yasuda M."/>
            <person name="Tabata S."/>
        </authorList>
    </citation>
    <scope>NUCLEOTIDE SEQUENCE [LARGE SCALE GENOMIC DNA]</scope>
    <source>
        <strain>cv. Columbia</strain>
    </source>
</reference>
<reference key="2">
    <citation type="journal article" date="2017" name="Plant J.">
        <title>Araport11: a complete reannotation of the Arabidopsis thaliana reference genome.</title>
        <authorList>
            <person name="Cheng C.Y."/>
            <person name="Krishnakumar V."/>
            <person name="Chan A.P."/>
            <person name="Thibaud-Nissen F."/>
            <person name="Schobel S."/>
            <person name="Town C.D."/>
        </authorList>
    </citation>
    <scope>GENOME REANNOTATION</scope>
    <source>
        <strain>cv. Columbia</strain>
    </source>
</reference>
<reference key="3">
    <citation type="journal article" date="2013" name="Plant Sci.">
        <title>APSR1, a novel gene required for meristem maintenance, is negatively regulated by low phosphate availability.</title>
        <authorList>
            <person name="Gonzalez-Mendoza V."/>
            <person name="Zurita-Silva A."/>
            <person name="Sanchez-Calderon L."/>
            <person name="Sanchez-Sandoval M.E."/>
            <person name="Oropeza-Aburto A."/>
            <person name="Gutierrez-Alanis D."/>
            <person name="Alatorre-Cobos F."/>
            <person name="Herrera-Estrella L."/>
        </authorList>
    </citation>
    <scope>FUNCTION</scope>
    <scope>SUBCELLULAR LOCATION</scope>
    <scope>TISSUE SPECIFICITY</scope>
    <scope>INDUCTION</scope>
    <scope>DISRUPTION PHENOTYPE</scope>
</reference>
<protein>
    <recommendedName>
        <fullName evidence="4">Protein ALTERED PHOSPHATE STARVATION RESPONSE 1</fullName>
    </recommendedName>
</protein>
<name>APSR1_ARATH</name>
<comment type="function">
    <text evidence="3">Required for the coordination of cell differentiation and cell elongation in the root tip (PubMed:23498857). Required for the coordination of cell processes necessary for correct root growth in response to phosphate starvation, through the modulation of the auxin transporter protein PIN7 (PubMed:23498857).</text>
</comment>
<comment type="subcellular location">
    <subcellularLocation>
        <location evidence="3">Nucleus</location>
    </subcellularLocation>
</comment>
<comment type="tissue specificity">
    <text evidence="3">Expressed in the root tip of primary and lateral roots, specifically in the meristematic region, including the quiescent center and lateral root cap cells.</text>
</comment>
<comment type="induction">
    <text evidence="3">Down-regulated by phosphate deficiency.</text>
</comment>
<comment type="disruption phenotype">
    <text evidence="3">Defects in primary root elongation and enhanced root hair elongation.</text>
</comment>
<comment type="sequence caution" evidence="5">
    <conflict type="erroneous gene model prediction">
        <sequence resource="EMBL-CDS" id="CAB62651"/>
    </conflict>
</comment>
<feature type="chain" id="PRO_0000448355" description="Protein ALTERED PHOSPHATE STARVATION RESPONSE 1">
    <location>
        <begin position="1"/>
        <end position="640"/>
    </location>
</feature>
<feature type="region of interest" description="Disordered" evidence="2">
    <location>
        <begin position="60"/>
        <end position="175"/>
    </location>
</feature>
<feature type="coiled-coil region" evidence="1">
    <location>
        <begin position="336"/>
        <end position="371"/>
    </location>
</feature>
<feature type="compositionally biased region" description="Pro residues" evidence="2">
    <location>
        <begin position="68"/>
        <end position="87"/>
    </location>
</feature>
<feature type="compositionally biased region" description="Low complexity" evidence="2">
    <location>
        <begin position="88"/>
        <end position="103"/>
    </location>
</feature>
<feature type="compositionally biased region" description="Pro residues" evidence="2">
    <location>
        <begin position="104"/>
        <end position="118"/>
    </location>
</feature>
<feature type="compositionally biased region" description="Low complexity" evidence="2">
    <location>
        <begin position="144"/>
        <end position="173"/>
    </location>
</feature>
<dbReference type="EMBL" id="AL132980">
    <property type="protein sequence ID" value="CAB62651.1"/>
    <property type="status" value="ALT_SEQ"/>
    <property type="molecule type" value="Genomic_DNA"/>
</dbReference>
<dbReference type="EMBL" id="CP002686">
    <property type="protein sequence ID" value="ANM65396.1"/>
    <property type="molecule type" value="Genomic_DNA"/>
</dbReference>
<dbReference type="PIR" id="T45760">
    <property type="entry name" value="T45760"/>
</dbReference>
<dbReference type="RefSeq" id="NP_001327368.1">
    <property type="nucleotide sequence ID" value="NM_001339498.1"/>
</dbReference>
<dbReference type="SMR" id="A0A178VBJ0"/>
<dbReference type="FunCoup" id="A0A178VBJ0">
    <property type="interactions" value="483"/>
</dbReference>
<dbReference type="STRING" id="3702.A0A178VBJ0"/>
<dbReference type="PaxDb" id="3702-AT3G51290.2"/>
<dbReference type="ProteomicsDB" id="201476"/>
<dbReference type="EnsemblPlants" id="AT3G51290.3">
    <property type="protein sequence ID" value="AT3G51290.3"/>
    <property type="gene ID" value="AT3G51290"/>
</dbReference>
<dbReference type="GeneID" id="824292"/>
<dbReference type="Gramene" id="AT3G51290.3">
    <property type="protein sequence ID" value="AT3G51290.3"/>
    <property type="gene ID" value="AT3G51290"/>
</dbReference>
<dbReference type="KEGG" id="ath:AT3G51290"/>
<dbReference type="Araport" id="AT3G51290"/>
<dbReference type="TAIR" id="AT3G51290">
    <property type="gene designation" value="APSR1"/>
</dbReference>
<dbReference type="InParanoid" id="A0A178VBJ0"/>
<dbReference type="OMA" id="QWHLAFC"/>
<dbReference type="PRO" id="PR:A0A178VBJ0"/>
<dbReference type="Proteomes" id="UP000006548">
    <property type="component" value="Chromosome 3"/>
</dbReference>
<dbReference type="ExpressionAtlas" id="A0A178VBJ0">
    <property type="expression patterns" value="baseline and differential"/>
</dbReference>
<dbReference type="GO" id="GO:0005634">
    <property type="term" value="C:nucleus"/>
    <property type="evidence" value="ECO:0007669"/>
    <property type="project" value="UniProtKB-SubCell"/>
</dbReference>
<dbReference type="InterPro" id="IPR006868">
    <property type="entry name" value="DUF630"/>
</dbReference>
<dbReference type="InterPro" id="IPR006867">
    <property type="entry name" value="DUF632"/>
</dbReference>
<dbReference type="PANTHER" id="PTHR21450">
    <property type="entry name" value="PROTEIN ALTERED PHOSPHATE STARVATION RESPONSE 1"/>
    <property type="match status" value="1"/>
</dbReference>
<dbReference type="PANTHER" id="PTHR21450:SF23">
    <property type="entry name" value="PROTEIN ALTERED PHOSPHATE STARVATION RESPONSE 1"/>
    <property type="match status" value="1"/>
</dbReference>
<dbReference type="Pfam" id="PF04783">
    <property type="entry name" value="DUF630"/>
    <property type="match status" value="1"/>
</dbReference>
<dbReference type="Pfam" id="PF04782">
    <property type="entry name" value="DUF632"/>
    <property type="match status" value="1"/>
</dbReference>